<accession>Q57074</accession>
<accession>O05020</accession>
<feature type="chain" id="PRO_0000166187" description="Iron-sulfur cluster assembly scaffold protein IscU">
    <location>
        <begin position="1"/>
        <end position="126"/>
    </location>
</feature>
<feature type="binding site">
    <location>
        <position position="37"/>
    </location>
    <ligand>
        <name>Zn(2+)</name>
        <dbReference type="ChEBI" id="CHEBI:29105"/>
    </ligand>
</feature>
<feature type="binding site">
    <location>
        <position position="63"/>
    </location>
    <ligand>
        <name>Zn(2+)</name>
        <dbReference type="ChEBI" id="CHEBI:29105"/>
    </ligand>
</feature>
<feature type="binding site">
    <location>
        <position position="105"/>
    </location>
    <ligand>
        <name>Zn(2+)</name>
        <dbReference type="ChEBI" id="CHEBI:29105"/>
    </ligand>
</feature>
<feature type="binding site">
    <location>
        <position position="106"/>
    </location>
    <ligand>
        <name>Zn(2+)</name>
        <dbReference type="ChEBI" id="CHEBI:29105"/>
    </ligand>
</feature>
<feature type="strand" evidence="4">
    <location>
        <begin position="3"/>
        <end position="5"/>
    </location>
</feature>
<feature type="turn" evidence="4">
    <location>
        <begin position="14"/>
        <end position="16"/>
    </location>
</feature>
<feature type="strand" evidence="4">
    <location>
        <begin position="21"/>
        <end position="24"/>
    </location>
</feature>
<feature type="strand" evidence="4">
    <location>
        <begin position="27"/>
        <end position="33"/>
    </location>
</feature>
<feature type="turn" evidence="4">
    <location>
        <begin position="35"/>
        <end position="37"/>
    </location>
</feature>
<feature type="strand" evidence="4">
    <location>
        <begin position="40"/>
        <end position="47"/>
    </location>
</feature>
<feature type="strand" evidence="4">
    <location>
        <begin position="49"/>
        <end position="59"/>
    </location>
</feature>
<feature type="turn" evidence="4">
    <location>
        <begin position="64"/>
        <end position="66"/>
    </location>
</feature>
<feature type="helix" evidence="4">
    <location>
        <begin position="67"/>
        <end position="77"/>
    </location>
</feature>
<feature type="helix" evidence="4">
    <location>
        <begin position="82"/>
        <end position="85"/>
    </location>
</feature>
<feature type="helix" evidence="4">
    <location>
        <begin position="90"/>
        <end position="97"/>
    </location>
</feature>
<feature type="helix" evidence="4">
    <location>
        <begin position="105"/>
        <end position="123"/>
    </location>
</feature>
<sequence>MAYSEKVIDHYENPRNVGSLDKKDSNVGTGMVGAPACGDVMQLQIKVDDNGIIEDAKFKTYGCGSAIASSSLITEWVKGKSLEEAGAIKNSQIAEELELPPVKVHCSILAEDAIKAAIADYKAKQG</sequence>
<reference key="1">
    <citation type="journal article" date="1995" name="Science">
        <title>Whole-genome random sequencing and assembly of Haemophilus influenzae Rd.</title>
        <authorList>
            <person name="Fleischmann R.D."/>
            <person name="Adams M.D."/>
            <person name="White O."/>
            <person name="Clayton R.A."/>
            <person name="Kirkness E.F."/>
            <person name="Kerlavage A.R."/>
            <person name="Bult C.J."/>
            <person name="Tomb J.-F."/>
            <person name="Dougherty B.A."/>
            <person name="Merrick J.M."/>
            <person name="McKenney K."/>
            <person name="Sutton G.G."/>
            <person name="FitzHugh W."/>
            <person name="Fields C.A."/>
            <person name="Gocayne J.D."/>
            <person name="Scott J.D."/>
            <person name="Shirley R."/>
            <person name="Liu L.-I."/>
            <person name="Glodek A."/>
            <person name="Kelley J.M."/>
            <person name="Weidman J.F."/>
            <person name="Phillips C.A."/>
            <person name="Spriggs T."/>
            <person name="Hedblom E."/>
            <person name="Cotton M.D."/>
            <person name="Utterback T.R."/>
            <person name="Hanna M.C."/>
            <person name="Nguyen D.T."/>
            <person name="Saudek D.M."/>
            <person name="Brandon R.C."/>
            <person name="Fine L.D."/>
            <person name="Fritchman J.L."/>
            <person name="Fuhrmann J.L."/>
            <person name="Geoghagen N.S.M."/>
            <person name="Gnehm C.L."/>
            <person name="McDonald L.A."/>
            <person name="Small K.V."/>
            <person name="Fraser C.M."/>
            <person name="Smith H.O."/>
            <person name="Venter J.C."/>
        </authorList>
    </citation>
    <scope>NUCLEOTIDE SEQUENCE [LARGE SCALE GENOMIC DNA]</scope>
    <source>
        <strain>ATCC 51907 / DSM 11121 / KW20 / Rd</strain>
    </source>
</reference>
<reference key="2">
    <citation type="submission" date="1996-09" db="EMBL/GenBank/DDBJ databases">
        <authorList>
            <person name="White O."/>
            <person name="Clayton R.A."/>
            <person name="Kerlavage A.R."/>
            <person name="Fleischmann R.D."/>
        </authorList>
    </citation>
    <scope>SEQUENCE REVISION</scope>
</reference>
<reference key="3">
    <citation type="journal article" date="2004" name="J. Mol. Biol.">
        <title>Solution NMR structure of the iron-sulfur cluster assembly protein U (IscU) with zinc bound at the active site.</title>
        <authorList>
            <person name="Ramelot T.A."/>
            <person name="Cort J.R."/>
            <person name="Goldsmith-Fischman S."/>
            <person name="Kornhaber G.J."/>
            <person name="Xiao R."/>
            <person name="Shastry R."/>
            <person name="Acton T.B."/>
            <person name="Honig B."/>
            <person name="Montelione G.T."/>
            <person name="Kennedy M.A."/>
        </authorList>
    </citation>
    <scope>STRUCTURE BY NMR OF THE APO PROTEIN AND IN COMPLEX WITH ZN(2+)</scope>
    <scope>SUBUNIT</scope>
    <scope>COFACTOR</scope>
</reference>
<proteinExistence type="evidence at protein level"/>
<comment type="function">
    <text evidence="1">A scaffold on which IscS assembles Fe-S clusters. Subsequently gives the nascent cluster to other proteins. It is likely that Fe-S cluster coordination is flexible as the role of this complex is to build and then hand off Fe-S clusters (By similarity).</text>
</comment>
<comment type="cofactor">
    <cofactor evidence="2">
        <name>Zn(2+)</name>
        <dbReference type="ChEBI" id="CHEBI:29105"/>
    </cofactor>
    <text evidence="2">Binds 1 Zn(2+) ion; this is probably a substitute for Fe-S centers.</text>
</comment>
<comment type="subunit">
    <text evidence="1 2">Forms a heterotetramer with IscS; each subunit of the IscS dimer contacts an IscU monomer (By similarity). Upon overexpression can be isolated a monomer, dimers and other oligomers.</text>
</comment>
<comment type="similarity">
    <text evidence="3">Belongs to the NifU family.</text>
</comment>
<name>ISCU_HAEIN</name>
<gene>
    <name type="primary">iscU</name>
    <name type="ordered locus">HI_0377</name>
</gene>
<evidence type="ECO:0000250" key="1"/>
<evidence type="ECO:0000269" key="2">
    <source>
    </source>
</evidence>
<evidence type="ECO:0000305" key="3"/>
<evidence type="ECO:0007829" key="4">
    <source>
        <dbReference type="PDB" id="1Q48"/>
    </source>
</evidence>
<dbReference type="EMBL" id="L42023">
    <property type="protein sequence ID" value="AAC22034.1"/>
    <property type="molecule type" value="Genomic_DNA"/>
</dbReference>
<dbReference type="RefSeq" id="NP_438538.2">
    <property type="nucleotide sequence ID" value="NC_000907.1"/>
</dbReference>
<dbReference type="PDB" id="1Q48">
    <property type="method" value="NMR"/>
    <property type="chains" value="A=1-126"/>
</dbReference>
<dbReference type="PDB" id="1R9P">
    <property type="method" value="NMR"/>
    <property type="chains" value="A=1-126"/>
</dbReference>
<dbReference type="PDBsum" id="1Q48"/>
<dbReference type="PDBsum" id="1R9P"/>
<dbReference type="BMRB" id="Q57074"/>
<dbReference type="SMR" id="Q57074"/>
<dbReference type="STRING" id="71421.HI_0377"/>
<dbReference type="EnsemblBacteria" id="AAC22034">
    <property type="protein sequence ID" value="AAC22034"/>
    <property type="gene ID" value="HI_0377"/>
</dbReference>
<dbReference type="KEGG" id="hin:HI_0377"/>
<dbReference type="PATRIC" id="fig|71421.8.peg.395"/>
<dbReference type="eggNOG" id="COG0822">
    <property type="taxonomic scope" value="Bacteria"/>
</dbReference>
<dbReference type="HOGENOM" id="CLU_079283_5_0_6"/>
<dbReference type="OrthoDB" id="9808097at2"/>
<dbReference type="PhylomeDB" id="Q57074"/>
<dbReference type="EvolutionaryTrace" id="Q57074"/>
<dbReference type="Proteomes" id="UP000000579">
    <property type="component" value="Chromosome"/>
</dbReference>
<dbReference type="GO" id="GO:0005737">
    <property type="term" value="C:cytoplasm"/>
    <property type="evidence" value="ECO:0000318"/>
    <property type="project" value="GO_Central"/>
</dbReference>
<dbReference type="GO" id="GO:0051537">
    <property type="term" value="F:2 iron, 2 sulfur cluster binding"/>
    <property type="evidence" value="ECO:0000318"/>
    <property type="project" value="GO_Central"/>
</dbReference>
<dbReference type="GO" id="GO:0008198">
    <property type="term" value="F:ferrous iron binding"/>
    <property type="evidence" value="ECO:0000318"/>
    <property type="project" value="GO_Central"/>
</dbReference>
<dbReference type="GO" id="GO:0006879">
    <property type="term" value="P:intracellular iron ion homeostasis"/>
    <property type="evidence" value="ECO:0000318"/>
    <property type="project" value="GO_Central"/>
</dbReference>
<dbReference type="GO" id="GO:0016226">
    <property type="term" value="P:iron-sulfur cluster assembly"/>
    <property type="evidence" value="ECO:0007669"/>
    <property type="project" value="InterPro"/>
</dbReference>
<dbReference type="CDD" id="cd06664">
    <property type="entry name" value="IscU_like"/>
    <property type="match status" value="1"/>
</dbReference>
<dbReference type="FunFam" id="3.90.1010.10:FF:000001">
    <property type="entry name" value="Iron-sulfur cluster assembly scaffold protein IscU"/>
    <property type="match status" value="1"/>
</dbReference>
<dbReference type="Gene3D" id="3.90.1010.10">
    <property type="match status" value="1"/>
</dbReference>
<dbReference type="InterPro" id="IPR011339">
    <property type="entry name" value="ISCU"/>
</dbReference>
<dbReference type="InterPro" id="IPR002871">
    <property type="entry name" value="NIF_FeS_clus_asmbl_NifU_N"/>
</dbReference>
<dbReference type="NCBIfam" id="TIGR01999">
    <property type="entry name" value="iscU"/>
    <property type="match status" value="1"/>
</dbReference>
<dbReference type="PANTHER" id="PTHR10093">
    <property type="entry name" value="IRON-SULFUR CLUSTER ASSEMBLY ENZYME NIFU HOMOLOG"/>
    <property type="match status" value="1"/>
</dbReference>
<dbReference type="Pfam" id="PF01592">
    <property type="entry name" value="NifU_N"/>
    <property type="match status" value="1"/>
</dbReference>
<dbReference type="SUPFAM" id="SSF82649">
    <property type="entry name" value="SufE/NifU"/>
    <property type="match status" value="1"/>
</dbReference>
<keyword id="KW-0002">3D-structure</keyword>
<keyword id="KW-0479">Metal-binding</keyword>
<keyword id="KW-1185">Reference proteome</keyword>
<keyword id="KW-0862">Zinc</keyword>
<organism>
    <name type="scientific">Haemophilus influenzae (strain ATCC 51907 / DSM 11121 / KW20 / Rd)</name>
    <dbReference type="NCBI Taxonomy" id="71421"/>
    <lineage>
        <taxon>Bacteria</taxon>
        <taxon>Pseudomonadati</taxon>
        <taxon>Pseudomonadota</taxon>
        <taxon>Gammaproteobacteria</taxon>
        <taxon>Pasteurellales</taxon>
        <taxon>Pasteurellaceae</taxon>
        <taxon>Haemophilus</taxon>
    </lineage>
</organism>
<protein>
    <recommendedName>
        <fullName>Iron-sulfur cluster assembly scaffold protein IscU</fullName>
    </recommendedName>
    <alternativeName>
        <fullName>Sulfur acceptor protein IscU</fullName>
    </alternativeName>
</protein>